<feature type="chain" id="PRO_0000402167" description="Oxysterol-binding protein-related protein 4C">
    <location>
        <begin position="1"/>
        <end position="379"/>
    </location>
</feature>
<protein>
    <recommendedName>
        <fullName>Oxysterol-binding protein-related protein 4C</fullName>
    </recommendedName>
    <alternativeName>
        <fullName>OSBP-related protein 4C</fullName>
    </alternativeName>
</protein>
<name>ORP4C_ARATH</name>
<comment type="function">
    <text evidence="1">May be involved in the transport of sterols.</text>
</comment>
<comment type="tissue specificity">
    <text evidence="2">Expressed in flowers.</text>
</comment>
<comment type="similarity">
    <text evidence="3">Belongs to the OSBP family.</text>
</comment>
<dbReference type="EMBL" id="AB019233">
    <property type="protein sequence ID" value="BAA96947.1"/>
    <property type="molecule type" value="Genomic_DNA"/>
</dbReference>
<dbReference type="EMBL" id="CP002688">
    <property type="protein sequence ID" value="AED96869.1"/>
    <property type="molecule type" value="Genomic_DNA"/>
</dbReference>
<dbReference type="EMBL" id="CP002688">
    <property type="protein sequence ID" value="AED96870.1"/>
    <property type="molecule type" value="Genomic_DNA"/>
</dbReference>
<dbReference type="EMBL" id="CP002688">
    <property type="protein sequence ID" value="ANM68212.1"/>
    <property type="molecule type" value="Genomic_DNA"/>
</dbReference>
<dbReference type="EMBL" id="AK117264">
    <property type="protein sequence ID" value="BAC41939.1"/>
    <property type="molecule type" value="mRNA"/>
</dbReference>
<dbReference type="RefSeq" id="NP_001032088.1">
    <property type="nucleotide sequence ID" value="NM_001037011.2"/>
</dbReference>
<dbReference type="RefSeq" id="NP_001329985.1">
    <property type="nucleotide sequence ID" value="NM_001345252.1"/>
</dbReference>
<dbReference type="RefSeq" id="NP_200534.1">
    <property type="nucleotide sequence ID" value="NM_125106.3"/>
</dbReference>
<dbReference type="SMR" id="Q9LVD4"/>
<dbReference type="FunCoup" id="Q9LVD4">
    <property type="interactions" value="1702"/>
</dbReference>
<dbReference type="STRING" id="3702.Q9LVD4"/>
<dbReference type="iPTMnet" id="Q9LVD4"/>
<dbReference type="PaxDb" id="3702-AT5G57240.2"/>
<dbReference type="ProteomicsDB" id="248738"/>
<dbReference type="EnsemblPlants" id="AT5G57240.1">
    <property type="protein sequence ID" value="AT5G57240.1"/>
    <property type="gene ID" value="AT5G57240"/>
</dbReference>
<dbReference type="EnsemblPlants" id="AT5G57240.2">
    <property type="protein sequence ID" value="AT5G57240.2"/>
    <property type="gene ID" value="AT5G57240"/>
</dbReference>
<dbReference type="EnsemblPlants" id="AT5G57240.5">
    <property type="protein sequence ID" value="AT5G57240.5"/>
    <property type="gene ID" value="AT5G57240"/>
</dbReference>
<dbReference type="GeneID" id="835830"/>
<dbReference type="Gramene" id="AT5G57240.1">
    <property type="protein sequence ID" value="AT5G57240.1"/>
    <property type="gene ID" value="AT5G57240"/>
</dbReference>
<dbReference type="Gramene" id="AT5G57240.2">
    <property type="protein sequence ID" value="AT5G57240.2"/>
    <property type="gene ID" value="AT5G57240"/>
</dbReference>
<dbReference type="Gramene" id="AT5G57240.5">
    <property type="protein sequence ID" value="AT5G57240.5"/>
    <property type="gene ID" value="AT5G57240"/>
</dbReference>
<dbReference type="KEGG" id="ath:AT5G57240"/>
<dbReference type="Araport" id="AT5G57240"/>
<dbReference type="TAIR" id="AT5G57240">
    <property type="gene designation" value="ORP4C"/>
</dbReference>
<dbReference type="eggNOG" id="KOG2210">
    <property type="taxonomic scope" value="Eukaryota"/>
</dbReference>
<dbReference type="HOGENOM" id="CLU_044270_0_0_1"/>
<dbReference type="InParanoid" id="Q9LVD4"/>
<dbReference type="PhylomeDB" id="Q9LVD4"/>
<dbReference type="PRO" id="PR:Q9LVD4"/>
<dbReference type="Proteomes" id="UP000006548">
    <property type="component" value="Chromosome 5"/>
</dbReference>
<dbReference type="ExpressionAtlas" id="Q9LVD4">
    <property type="expression patterns" value="baseline and differential"/>
</dbReference>
<dbReference type="GO" id="GO:0008289">
    <property type="term" value="F:lipid binding"/>
    <property type="evidence" value="ECO:0007669"/>
    <property type="project" value="UniProtKB-KW"/>
</dbReference>
<dbReference type="GO" id="GO:0006869">
    <property type="term" value="P:lipid transport"/>
    <property type="evidence" value="ECO:0007669"/>
    <property type="project" value="UniProtKB-KW"/>
</dbReference>
<dbReference type="FunFam" id="3.30.70.3490:FF:000007">
    <property type="entry name" value="Oxysterol-binding protein-related protein 4B"/>
    <property type="match status" value="1"/>
</dbReference>
<dbReference type="FunFam" id="2.40.160.120:FF:000011">
    <property type="entry name" value="Oxysterol-binding protein-related protein 4C"/>
    <property type="match status" value="1"/>
</dbReference>
<dbReference type="Gene3D" id="2.40.160.120">
    <property type="match status" value="1"/>
</dbReference>
<dbReference type="Gene3D" id="3.30.70.3490">
    <property type="match status" value="1"/>
</dbReference>
<dbReference type="InterPro" id="IPR037239">
    <property type="entry name" value="OSBP_sf"/>
</dbReference>
<dbReference type="InterPro" id="IPR000648">
    <property type="entry name" value="Oxysterol-bd"/>
</dbReference>
<dbReference type="InterPro" id="IPR018494">
    <property type="entry name" value="Oxysterol-bd_CS"/>
</dbReference>
<dbReference type="PANTHER" id="PTHR10972">
    <property type="entry name" value="OXYSTEROL-BINDING PROTEIN-RELATED"/>
    <property type="match status" value="1"/>
</dbReference>
<dbReference type="PANTHER" id="PTHR10972:SF204">
    <property type="entry name" value="OXYSTEROL-BINDING PROTEIN-RELATED PROTEIN 4C"/>
    <property type="match status" value="1"/>
</dbReference>
<dbReference type="Pfam" id="PF01237">
    <property type="entry name" value="Oxysterol_BP"/>
    <property type="match status" value="1"/>
</dbReference>
<dbReference type="SUPFAM" id="SSF144000">
    <property type="entry name" value="Oxysterol-binding protein-like"/>
    <property type="match status" value="1"/>
</dbReference>
<dbReference type="PROSITE" id="PS01013">
    <property type="entry name" value="OSBP"/>
    <property type="match status" value="1"/>
</dbReference>
<evidence type="ECO:0000250" key="1"/>
<evidence type="ECO:0000269" key="2">
    <source>
    </source>
</evidence>
<evidence type="ECO:0000305" key="3"/>
<proteinExistence type="evidence at transcript level"/>
<organism>
    <name type="scientific">Arabidopsis thaliana</name>
    <name type="common">Mouse-ear cress</name>
    <dbReference type="NCBI Taxonomy" id="3702"/>
    <lineage>
        <taxon>Eukaryota</taxon>
        <taxon>Viridiplantae</taxon>
        <taxon>Streptophyta</taxon>
        <taxon>Embryophyta</taxon>
        <taxon>Tracheophyta</taxon>
        <taxon>Spermatophyta</taxon>
        <taxon>Magnoliopsida</taxon>
        <taxon>eudicotyledons</taxon>
        <taxon>Gunneridae</taxon>
        <taxon>Pentapetalae</taxon>
        <taxon>rosids</taxon>
        <taxon>malvids</taxon>
        <taxon>Brassicales</taxon>
        <taxon>Brassicaceae</taxon>
        <taxon>Camelineae</taxon>
        <taxon>Arabidopsis</taxon>
    </lineage>
</organism>
<gene>
    <name type="primary">ORP4C</name>
    <name type="ordered locus">At5g57240</name>
    <name type="ORF">MJB24.5</name>
</gene>
<sequence length="379" mass="42968">MKKHVMLVKPFSLEDEKDSENTPPNLIQRILSLFKNVRPGSDLTNFQLPPQMNLARSQLQCYGEIVYSFDGHDLLGECSRRDKPIERMKAMVTWYISTLRPLIFGLAPYNPVIGETHHVSNGHINVLAEQISHHPPVSALHATHEKENVDVLLCQYFTPKFRGAYVDVEVKGKRVVKLLNHKETYEMNQPKLLMTFLPAMGAHWAGKIVIKCPETGLGAELQLLSDSFLSRFTGNNKRAIKGKIFESSSRKQLYEISGHWDRTVTAKNTKTGQLEVIYKASENIAKLKTPIVENLQEVSESESAVVWGEVSEGIVTNNWEKAREAKRDVEEKQRESLRKRKASGQSWIPKHFSVARTGKDWDCVPLQPTVPRAPIVVPL</sequence>
<reference key="1">
    <citation type="journal article" date="2000" name="DNA Res.">
        <title>Structural analysis of Arabidopsis thaliana chromosome 5. X. Sequence features of the regions of 3,076,755 bp covered by sixty P1 and TAC clones.</title>
        <authorList>
            <person name="Sato S."/>
            <person name="Nakamura Y."/>
            <person name="Kaneko T."/>
            <person name="Katoh T."/>
            <person name="Asamizu E."/>
            <person name="Kotani H."/>
            <person name="Tabata S."/>
        </authorList>
    </citation>
    <scope>NUCLEOTIDE SEQUENCE [LARGE SCALE GENOMIC DNA]</scope>
    <source>
        <strain>cv. Columbia</strain>
    </source>
</reference>
<reference key="2">
    <citation type="journal article" date="2017" name="Plant J.">
        <title>Araport11: a complete reannotation of the Arabidopsis thaliana reference genome.</title>
        <authorList>
            <person name="Cheng C.Y."/>
            <person name="Krishnakumar V."/>
            <person name="Chan A.P."/>
            <person name="Thibaud-Nissen F."/>
            <person name="Schobel S."/>
            <person name="Town C.D."/>
        </authorList>
    </citation>
    <scope>GENOME REANNOTATION</scope>
    <source>
        <strain>cv. Columbia</strain>
    </source>
</reference>
<reference key="3">
    <citation type="journal article" date="2002" name="Science">
        <title>Functional annotation of a full-length Arabidopsis cDNA collection.</title>
        <authorList>
            <person name="Seki M."/>
            <person name="Narusaka M."/>
            <person name="Kamiya A."/>
            <person name="Ishida J."/>
            <person name="Satou M."/>
            <person name="Sakurai T."/>
            <person name="Nakajima M."/>
            <person name="Enju A."/>
            <person name="Akiyama K."/>
            <person name="Oono Y."/>
            <person name="Muramatsu M."/>
            <person name="Hayashizaki Y."/>
            <person name="Kawai J."/>
            <person name="Carninci P."/>
            <person name="Itoh M."/>
            <person name="Ishii Y."/>
            <person name="Arakawa T."/>
            <person name="Shibata K."/>
            <person name="Shinagawa A."/>
            <person name="Shinozaki K."/>
        </authorList>
    </citation>
    <scope>NUCLEOTIDE SEQUENCE [LARGE SCALE MRNA]</scope>
    <source>
        <strain>cv. Columbia</strain>
    </source>
</reference>
<reference key="4">
    <citation type="journal article" date="2006" name="Plant Mol. Biol.">
        <title>Identification and characterization of PiORP1, a Petunia oxysterol-binding-protein related protein involved in receptor-kinase mediated signaling in pollen, and analysis of the ORP gene family in Arabidopsis.</title>
        <authorList>
            <person name="Skirpan A.L."/>
            <person name="Dowd P.E."/>
            <person name="Sijacic P."/>
            <person name="Jaworski C.J."/>
            <person name="Gilroy S."/>
            <person name="Kao T.H."/>
        </authorList>
    </citation>
    <scope>TISSUE SPECIFICITY</scope>
    <scope>GENE FAMILY</scope>
    <scope>NOMENCLATURE</scope>
</reference>
<keyword id="KW-0445">Lipid transport</keyword>
<keyword id="KW-0446">Lipid-binding</keyword>
<keyword id="KW-1185">Reference proteome</keyword>
<keyword id="KW-0813">Transport</keyword>
<accession>Q9LVD4</accession>